<feature type="initiator methionine" description="Removed" evidence="1">
    <location>
        <position position="1"/>
    </location>
</feature>
<feature type="chain" id="PRO_0000359650" description="Photosystem II D2 protein">
    <location>
        <begin position="2"/>
        <end position="353"/>
    </location>
</feature>
<feature type="transmembrane region" description="Helical" evidence="2">
    <location>
        <begin position="41"/>
        <end position="61"/>
    </location>
</feature>
<feature type="transmembrane region" description="Helical" evidence="2">
    <location>
        <begin position="125"/>
        <end position="141"/>
    </location>
</feature>
<feature type="transmembrane region" description="Helical" evidence="2">
    <location>
        <begin position="153"/>
        <end position="166"/>
    </location>
</feature>
<feature type="transmembrane region" description="Helical" evidence="2">
    <location>
        <begin position="208"/>
        <end position="228"/>
    </location>
</feature>
<feature type="transmembrane region" description="Helical" evidence="2">
    <location>
        <begin position="279"/>
        <end position="295"/>
    </location>
</feature>
<feature type="binding site" description="axial binding residue" evidence="2">
    <location>
        <position position="118"/>
    </location>
    <ligand>
        <name>chlorophyll a</name>
        <dbReference type="ChEBI" id="CHEBI:58416"/>
        <label>ChlzD2</label>
    </ligand>
    <ligandPart>
        <name>Mg</name>
        <dbReference type="ChEBI" id="CHEBI:25107"/>
    </ligandPart>
</feature>
<feature type="binding site" evidence="2">
    <location>
        <position position="130"/>
    </location>
    <ligand>
        <name>pheophytin a</name>
        <dbReference type="ChEBI" id="CHEBI:136840"/>
        <label>D2</label>
    </ligand>
</feature>
<feature type="binding site" evidence="2">
    <location>
        <position position="143"/>
    </location>
    <ligand>
        <name>pheophytin a</name>
        <dbReference type="ChEBI" id="CHEBI:136840"/>
        <label>D2</label>
    </ligand>
</feature>
<feature type="binding site" description="axial binding residue" evidence="2">
    <location>
        <position position="198"/>
    </location>
    <ligand>
        <name>chlorophyll a</name>
        <dbReference type="ChEBI" id="CHEBI:58416"/>
        <label>PD2</label>
    </ligand>
    <ligandPart>
        <name>Mg</name>
        <dbReference type="ChEBI" id="CHEBI:25107"/>
    </ligandPart>
</feature>
<feature type="binding site" evidence="2">
    <location>
        <position position="215"/>
    </location>
    <ligand>
        <name>a plastoquinone</name>
        <dbReference type="ChEBI" id="CHEBI:17757"/>
        <label>Q(A)</label>
    </ligand>
</feature>
<feature type="binding site" evidence="2">
    <location>
        <position position="215"/>
    </location>
    <ligand>
        <name>Fe cation</name>
        <dbReference type="ChEBI" id="CHEBI:24875"/>
        <note>ligand shared with heterodimeric partner</note>
    </ligand>
</feature>
<feature type="binding site" evidence="2">
    <location>
        <position position="262"/>
    </location>
    <ligand>
        <name>a plastoquinone</name>
        <dbReference type="ChEBI" id="CHEBI:17757"/>
        <label>Q(A)</label>
    </ligand>
</feature>
<feature type="binding site" evidence="2">
    <location>
        <position position="269"/>
    </location>
    <ligand>
        <name>Fe cation</name>
        <dbReference type="ChEBI" id="CHEBI:24875"/>
        <note>ligand shared with heterodimeric partner</note>
    </ligand>
</feature>
<feature type="modified residue" description="N-acetylthreonine" evidence="1">
    <location>
        <position position="2"/>
    </location>
</feature>
<feature type="modified residue" description="Phosphothreonine" evidence="1">
    <location>
        <position position="2"/>
    </location>
</feature>
<gene>
    <name evidence="2" type="primary">psbD</name>
</gene>
<comment type="function">
    <text evidence="2">Photosystem II (PSII) is a light-driven water:plastoquinone oxidoreductase that uses light energy to abstract electrons from H(2)O, generating O(2) and a proton gradient subsequently used for ATP formation. It consists of a core antenna complex that captures photons, and an electron transfer chain that converts photonic excitation into a charge separation. The D1/D2 (PsbA/PsbD) reaction center heterodimer binds P680, the primary electron donor of PSII as well as several subsequent electron acceptors. D2 is needed for assembly of a stable PSII complex.</text>
</comment>
<comment type="catalytic activity">
    <reaction evidence="2">
        <text>2 a plastoquinone + 4 hnu + 2 H2O = 2 a plastoquinol + O2</text>
        <dbReference type="Rhea" id="RHEA:36359"/>
        <dbReference type="Rhea" id="RHEA-COMP:9561"/>
        <dbReference type="Rhea" id="RHEA-COMP:9562"/>
        <dbReference type="ChEBI" id="CHEBI:15377"/>
        <dbReference type="ChEBI" id="CHEBI:15379"/>
        <dbReference type="ChEBI" id="CHEBI:17757"/>
        <dbReference type="ChEBI" id="CHEBI:30212"/>
        <dbReference type="ChEBI" id="CHEBI:62192"/>
        <dbReference type="EC" id="1.10.3.9"/>
    </reaction>
</comment>
<comment type="cofactor">
    <text evidence="2">The D1/D2 heterodimer binds P680, chlorophylls that are the primary electron donor of PSII, and subsequent electron acceptors. It shares a non-heme iron and each subunit binds pheophytin, quinone, additional chlorophylls, carotenoids and lipids. There is also a Cl(-1) ion associated with D1 and D2, which is required for oxygen evolution. The PSII complex binds additional chlorophylls, carotenoids and specific lipids.</text>
</comment>
<comment type="subunit">
    <text evidence="2">PSII is composed of 1 copy each of membrane proteins PsbA, PsbB, PsbC, PsbD, PsbE, PsbF, PsbH, PsbI, PsbJ, PsbK, PsbL, PsbM, PsbT, PsbX, PsbY, PsbZ, Psb30/Ycf12, at least 3 peripheral proteins of the oxygen-evolving complex and a large number of cofactors. It forms dimeric complexes.</text>
</comment>
<comment type="subcellular location">
    <subcellularLocation>
        <location evidence="2">Plastid</location>
        <location evidence="2">Chloroplast thylakoid membrane</location>
        <topology evidence="2">Multi-pass membrane protein</topology>
    </subcellularLocation>
</comment>
<comment type="miscellaneous">
    <text evidence="2">2 of the reaction center chlorophylls (ChlD1 and ChlD2) are entirely coordinated by water.</text>
</comment>
<comment type="similarity">
    <text evidence="2">Belongs to the reaction center PufL/M/PsbA/D family.</text>
</comment>
<geneLocation type="chloroplast"/>
<proteinExistence type="inferred from homology"/>
<name>PSBD_DRIGR</name>
<reference key="1">
    <citation type="journal article" date="2006" name="BMC Evol. Biol.">
        <title>Complete plastid genome sequences of Drimys, Liriodendron, and Piper: implications for the phylogenetic relationships of magnoliids.</title>
        <authorList>
            <person name="Cai Z."/>
            <person name="Penaflor C."/>
            <person name="Kuehl J.V."/>
            <person name="Leebens-Mack J."/>
            <person name="Carlson J.E."/>
            <person name="dePamphilis C.W."/>
            <person name="Boore J.L."/>
            <person name="Jansen R.K."/>
        </authorList>
    </citation>
    <scope>NUCLEOTIDE SEQUENCE [LARGE SCALE GENOMIC DNA]</scope>
</reference>
<sequence>MTIALGTFTKEENDLFDIMDDWLRRDRFVFVGWSGLLLFPCAYFALGGWFTGTTFVTSWYTHGLASSYLEGCNFLTAAVSTPANSLAHSLLLLWGPEAQGDFTRWCQLGGLWTFVALHGAFGLIGFMLRQFELARSVQLRPYNAIAFSGPIAVFVSVFLIYPLGQSGWFFAPSFGVAAIFRFILFFQGFHNWTLNPFHMMGVAGVLGAALLCAIHGATVENTLFEDGDGANTFRAFNPTQAEETYSMVTANRFWSQIFGVAFSNKRWLHFFMLFVPVTGLWMSAIGVVGLALNLRAYDFVSQEIRAAEDPEFETFYTKNILLNEGIRAWMAAQDQPHENLIFPEEVLPRGNAL</sequence>
<protein>
    <recommendedName>
        <fullName evidence="2">Photosystem II D2 protein</fullName>
        <shortName evidence="2">PSII D2 protein</shortName>
        <ecNumber evidence="2">1.10.3.9</ecNumber>
    </recommendedName>
    <alternativeName>
        <fullName evidence="2">Photosystem Q(A) protein</fullName>
    </alternativeName>
</protein>
<dbReference type="EC" id="1.10.3.9" evidence="2"/>
<dbReference type="EMBL" id="DQ887676">
    <property type="protein sequence ID" value="ABH88292.1"/>
    <property type="molecule type" value="Genomic_DNA"/>
</dbReference>
<dbReference type="RefSeq" id="YP_784381.1">
    <property type="nucleotide sequence ID" value="NC_008456.1"/>
</dbReference>
<dbReference type="SMR" id="Q06H02"/>
<dbReference type="GeneID" id="4363542"/>
<dbReference type="GO" id="GO:0009535">
    <property type="term" value="C:chloroplast thylakoid membrane"/>
    <property type="evidence" value="ECO:0007669"/>
    <property type="project" value="UniProtKB-SubCell"/>
</dbReference>
<dbReference type="GO" id="GO:0009523">
    <property type="term" value="C:photosystem II"/>
    <property type="evidence" value="ECO:0007669"/>
    <property type="project" value="UniProtKB-KW"/>
</dbReference>
<dbReference type="GO" id="GO:0016168">
    <property type="term" value="F:chlorophyll binding"/>
    <property type="evidence" value="ECO:0007669"/>
    <property type="project" value="UniProtKB-UniRule"/>
</dbReference>
<dbReference type="GO" id="GO:0045156">
    <property type="term" value="F:electron transporter, transferring electrons within the cyclic electron transport pathway of photosynthesis activity"/>
    <property type="evidence" value="ECO:0007669"/>
    <property type="project" value="InterPro"/>
</dbReference>
<dbReference type="GO" id="GO:0005506">
    <property type="term" value="F:iron ion binding"/>
    <property type="evidence" value="ECO:0007669"/>
    <property type="project" value="UniProtKB-UniRule"/>
</dbReference>
<dbReference type="GO" id="GO:0010242">
    <property type="term" value="F:oxygen evolving activity"/>
    <property type="evidence" value="ECO:0007669"/>
    <property type="project" value="UniProtKB-EC"/>
</dbReference>
<dbReference type="GO" id="GO:0009772">
    <property type="term" value="P:photosynthetic electron transport in photosystem II"/>
    <property type="evidence" value="ECO:0007669"/>
    <property type="project" value="InterPro"/>
</dbReference>
<dbReference type="CDD" id="cd09288">
    <property type="entry name" value="Photosystem-II_D2"/>
    <property type="match status" value="1"/>
</dbReference>
<dbReference type="FunFam" id="1.20.85.10:FF:000001">
    <property type="entry name" value="photosystem II D2 protein-like"/>
    <property type="match status" value="1"/>
</dbReference>
<dbReference type="Gene3D" id="1.20.85.10">
    <property type="entry name" value="Photosystem II protein D1-like"/>
    <property type="match status" value="1"/>
</dbReference>
<dbReference type="HAMAP" id="MF_01383">
    <property type="entry name" value="PSII_PsbD_D2"/>
    <property type="match status" value="1"/>
</dbReference>
<dbReference type="InterPro" id="IPR055266">
    <property type="entry name" value="D1/D2"/>
</dbReference>
<dbReference type="InterPro" id="IPR036854">
    <property type="entry name" value="Photo_II_D1/D2_sf"/>
</dbReference>
<dbReference type="InterPro" id="IPR000484">
    <property type="entry name" value="Photo_RC_L/M"/>
</dbReference>
<dbReference type="InterPro" id="IPR055265">
    <property type="entry name" value="Photo_RC_L/M_CS"/>
</dbReference>
<dbReference type="InterPro" id="IPR005868">
    <property type="entry name" value="PSII_PsbD/D2"/>
</dbReference>
<dbReference type="NCBIfam" id="TIGR01152">
    <property type="entry name" value="psbD"/>
    <property type="match status" value="1"/>
</dbReference>
<dbReference type="PANTHER" id="PTHR33149:SF12">
    <property type="entry name" value="PHOTOSYSTEM II D2 PROTEIN"/>
    <property type="match status" value="1"/>
</dbReference>
<dbReference type="PANTHER" id="PTHR33149">
    <property type="entry name" value="PHOTOSYSTEM II PROTEIN D1"/>
    <property type="match status" value="1"/>
</dbReference>
<dbReference type="Pfam" id="PF00124">
    <property type="entry name" value="Photo_RC"/>
    <property type="match status" value="1"/>
</dbReference>
<dbReference type="PRINTS" id="PR00256">
    <property type="entry name" value="REACTNCENTRE"/>
</dbReference>
<dbReference type="SUPFAM" id="SSF81483">
    <property type="entry name" value="Bacterial photosystem II reaction centre, L and M subunits"/>
    <property type="match status" value="1"/>
</dbReference>
<dbReference type="PROSITE" id="PS00244">
    <property type="entry name" value="REACTION_CENTER"/>
    <property type="match status" value="1"/>
</dbReference>
<accession>Q06H02</accession>
<evidence type="ECO:0000250" key="1">
    <source>
        <dbReference type="UniProtKB" id="P56761"/>
    </source>
</evidence>
<evidence type="ECO:0000255" key="2">
    <source>
        <dbReference type="HAMAP-Rule" id="MF_01383"/>
    </source>
</evidence>
<organism>
    <name type="scientific">Drimys granadensis</name>
    <dbReference type="NCBI Taxonomy" id="224735"/>
    <lineage>
        <taxon>Eukaryota</taxon>
        <taxon>Viridiplantae</taxon>
        <taxon>Streptophyta</taxon>
        <taxon>Embryophyta</taxon>
        <taxon>Tracheophyta</taxon>
        <taxon>Spermatophyta</taxon>
        <taxon>Magnoliopsida</taxon>
        <taxon>Magnoliidae</taxon>
        <taxon>Canellales</taxon>
        <taxon>Winteraceae</taxon>
        <taxon>Drimys</taxon>
    </lineage>
</organism>
<keyword id="KW-0007">Acetylation</keyword>
<keyword id="KW-0148">Chlorophyll</keyword>
<keyword id="KW-0150">Chloroplast</keyword>
<keyword id="KW-0157">Chromophore</keyword>
<keyword id="KW-0249">Electron transport</keyword>
<keyword id="KW-0408">Iron</keyword>
<keyword id="KW-0460">Magnesium</keyword>
<keyword id="KW-0472">Membrane</keyword>
<keyword id="KW-0479">Metal-binding</keyword>
<keyword id="KW-0560">Oxidoreductase</keyword>
<keyword id="KW-0597">Phosphoprotein</keyword>
<keyword id="KW-0602">Photosynthesis</keyword>
<keyword id="KW-0604">Photosystem II</keyword>
<keyword id="KW-0934">Plastid</keyword>
<keyword id="KW-0793">Thylakoid</keyword>
<keyword id="KW-0812">Transmembrane</keyword>
<keyword id="KW-1133">Transmembrane helix</keyword>
<keyword id="KW-0813">Transport</keyword>